<dbReference type="EMBL" id="AL009126">
    <property type="protein sequence ID" value="CAB12729.1"/>
    <property type="molecule type" value="Genomic_DNA"/>
</dbReference>
<dbReference type="EMBL" id="X96983">
    <property type="protein sequence ID" value="CAA65684.1"/>
    <property type="molecule type" value="Genomic_DNA"/>
</dbReference>
<dbReference type="PIR" id="E69821">
    <property type="entry name" value="E69821"/>
</dbReference>
<dbReference type="RefSeq" id="NP_388782.1">
    <property type="nucleotide sequence ID" value="NC_000964.3"/>
</dbReference>
<dbReference type="RefSeq" id="WP_003233429.1">
    <property type="nucleotide sequence ID" value="NZ_OZ025638.1"/>
</dbReference>
<dbReference type="SMR" id="P54585"/>
<dbReference type="FunCoup" id="P54585">
    <property type="interactions" value="51"/>
</dbReference>
<dbReference type="STRING" id="224308.BSU09010"/>
<dbReference type="PaxDb" id="224308-BSU09010"/>
<dbReference type="EnsemblBacteria" id="CAB12729">
    <property type="protein sequence ID" value="CAB12729"/>
    <property type="gene ID" value="BSU_09010"/>
</dbReference>
<dbReference type="GeneID" id="936235"/>
<dbReference type="KEGG" id="bsu:BSU09010"/>
<dbReference type="PATRIC" id="fig|224308.179.peg.974"/>
<dbReference type="eggNOG" id="COG2814">
    <property type="taxonomic scope" value="Bacteria"/>
</dbReference>
<dbReference type="InParanoid" id="P54585"/>
<dbReference type="OrthoDB" id="9816041at2"/>
<dbReference type="PhylomeDB" id="P54585"/>
<dbReference type="BioCyc" id="BSUB:BSU09010-MONOMER"/>
<dbReference type="Proteomes" id="UP000001570">
    <property type="component" value="Chromosome"/>
</dbReference>
<dbReference type="GO" id="GO:0016020">
    <property type="term" value="C:membrane"/>
    <property type="evidence" value="ECO:0000318"/>
    <property type="project" value="GO_Central"/>
</dbReference>
<dbReference type="GO" id="GO:0005886">
    <property type="term" value="C:plasma membrane"/>
    <property type="evidence" value="ECO:0007669"/>
    <property type="project" value="UniProtKB-SubCell"/>
</dbReference>
<dbReference type="GO" id="GO:0022857">
    <property type="term" value="F:transmembrane transporter activity"/>
    <property type="evidence" value="ECO:0007669"/>
    <property type="project" value="InterPro"/>
</dbReference>
<dbReference type="CDD" id="cd17503">
    <property type="entry name" value="MFS_LmrB_MDR_like"/>
    <property type="match status" value="1"/>
</dbReference>
<dbReference type="Gene3D" id="1.20.1250.20">
    <property type="entry name" value="MFS general substrate transporter like domains"/>
    <property type="match status" value="1"/>
</dbReference>
<dbReference type="Gene3D" id="1.20.1720.10">
    <property type="entry name" value="Multidrug resistance protein D"/>
    <property type="match status" value="1"/>
</dbReference>
<dbReference type="InterPro" id="IPR004638">
    <property type="entry name" value="EmrB-like"/>
</dbReference>
<dbReference type="InterPro" id="IPR011701">
    <property type="entry name" value="MFS"/>
</dbReference>
<dbReference type="InterPro" id="IPR020846">
    <property type="entry name" value="MFS_dom"/>
</dbReference>
<dbReference type="InterPro" id="IPR036259">
    <property type="entry name" value="MFS_trans_sf"/>
</dbReference>
<dbReference type="NCBIfam" id="TIGR00711">
    <property type="entry name" value="efflux_EmrB"/>
    <property type="match status" value="1"/>
</dbReference>
<dbReference type="PANTHER" id="PTHR42718">
    <property type="entry name" value="MAJOR FACILITATOR SUPERFAMILY MULTIDRUG TRANSPORTER MFSC"/>
    <property type="match status" value="1"/>
</dbReference>
<dbReference type="PANTHER" id="PTHR42718:SF9">
    <property type="entry name" value="MAJOR FACILITATOR SUPERFAMILY MULTIDRUG TRANSPORTER MFSC"/>
    <property type="match status" value="1"/>
</dbReference>
<dbReference type="Pfam" id="PF07690">
    <property type="entry name" value="MFS_1"/>
    <property type="match status" value="1"/>
</dbReference>
<dbReference type="PRINTS" id="PR01036">
    <property type="entry name" value="TCRTETB"/>
</dbReference>
<dbReference type="SUPFAM" id="SSF103473">
    <property type="entry name" value="MFS general substrate transporter"/>
    <property type="match status" value="1"/>
</dbReference>
<dbReference type="PROSITE" id="PS50850">
    <property type="entry name" value="MFS"/>
    <property type="match status" value="1"/>
</dbReference>
<keyword id="KW-1003">Cell membrane</keyword>
<keyword id="KW-0472">Membrane</keyword>
<keyword id="KW-1185">Reference proteome</keyword>
<keyword id="KW-0812">Transmembrane</keyword>
<keyword id="KW-1133">Transmembrane helix</keyword>
<keyword id="KW-0813">Transport</keyword>
<feature type="chain" id="PRO_0000173418" description="Uncharacterized MFS-type transporter YhcA">
    <location>
        <begin position="1"/>
        <end position="532"/>
    </location>
</feature>
<feature type="transmembrane region" description="Helical" evidence="1">
    <location>
        <begin position="13"/>
        <end position="33"/>
    </location>
</feature>
<feature type="transmembrane region" description="Helical" evidence="1">
    <location>
        <begin position="53"/>
        <end position="73"/>
    </location>
</feature>
<feature type="transmembrane region" description="Helical" evidence="1">
    <location>
        <begin position="80"/>
        <end position="100"/>
    </location>
</feature>
<feature type="transmembrane region" description="Helical" evidence="1">
    <location>
        <begin position="111"/>
        <end position="131"/>
    </location>
</feature>
<feature type="transmembrane region" description="Helical" evidence="1">
    <location>
        <begin position="142"/>
        <end position="162"/>
    </location>
</feature>
<feature type="transmembrane region" description="Helical" evidence="1">
    <location>
        <begin position="169"/>
        <end position="189"/>
    </location>
</feature>
<feature type="transmembrane region" description="Helical" evidence="1">
    <location>
        <begin position="203"/>
        <end position="223"/>
    </location>
</feature>
<feature type="transmembrane region" description="Helical" evidence="1">
    <location>
        <begin position="231"/>
        <end position="251"/>
    </location>
</feature>
<feature type="transmembrane region" description="Helical" evidence="1">
    <location>
        <begin position="273"/>
        <end position="293"/>
    </location>
</feature>
<feature type="transmembrane region" description="Helical" evidence="1">
    <location>
        <begin position="306"/>
        <end position="326"/>
    </location>
</feature>
<feature type="transmembrane region" description="Helical" evidence="1">
    <location>
        <begin position="334"/>
        <end position="354"/>
    </location>
</feature>
<feature type="transmembrane region" description="Helical" evidence="1">
    <location>
        <begin position="361"/>
        <end position="381"/>
    </location>
</feature>
<feature type="transmembrane region" description="Helical" evidence="1">
    <location>
        <begin position="483"/>
        <end position="503"/>
    </location>
</feature>
<proteinExistence type="inferred from homology"/>
<protein>
    <recommendedName>
        <fullName>Uncharacterized MFS-type transporter YhcA</fullName>
    </recommendedName>
</protein>
<name>YHCA_BACSU</name>
<organism>
    <name type="scientific">Bacillus subtilis (strain 168)</name>
    <dbReference type="NCBI Taxonomy" id="224308"/>
    <lineage>
        <taxon>Bacteria</taxon>
        <taxon>Bacillati</taxon>
        <taxon>Bacillota</taxon>
        <taxon>Bacilli</taxon>
        <taxon>Bacillales</taxon>
        <taxon>Bacillaceae</taxon>
        <taxon>Bacillus</taxon>
    </lineage>
</organism>
<evidence type="ECO:0000255" key="1"/>
<evidence type="ECO:0000305" key="2"/>
<gene>
    <name type="primary">yhcA</name>
    <name type="ordered locus">BSU09010</name>
</gene>
<accession>P54585</accession>
<sequence>MATGKEKNAKNPMSLLIVLMAGLFLAILNQTLLNVAMPHLMTEFGVSATTIQWLTTGYMLVNGVLIPLSAFLITRFGQRSLFLVAMFCFTLGTLVCGIAPNFSTMLIGRLIQAVGGGILQPLVMTTILLIFPPESRGKGMGIFGLAMMFAPAVGPTLSGWIIEHYTWRIMFYGLVPIGAIVIIVAFFIFKNMVEPQKIKLDTLGAILSIVGFASLLYGVSEAGSDGWTDPIVLSTVIIGAIAIVAFVVQQLRHDDPMLDFRVFKYDIFSLSSVINIIITVALYTGMFLLPIYLQNLVGFTALQSGLLLLPGAIVMLIMSPISGILFDKFGPRPLAIIGLLVTVVTTYQYTQLTIDTPYTHIMLIYSIRAFGMSLLMMPVMTAGMNQLPARLNSHGTAMSNTLRQISGSIGTSLITTIYTNRTTFHYSQIADKTSTADPNFLHAFQNAVSNLMVNMNVSYDTAKTYVYSHIYKHASLDSNVMGINDAFMWATLFCVAGLILSIFLRDVRKDKLRKKKKEELSLLPAPKEAKES</sequence>
<comment type="subcellular location">
    <subcellularLocation>
        <location evidence="2">Cell membrane</location>
        <topology evidence="2">Multi-pass membrane protein</topology>
    </subcellularLocation>
</comment>
<comment type="similarity">
    <text evidence="2">Belongs to the major facilitator superfamily. EmrB family.</text>
</comment>
<reference key="1">
    <citation type="journal article" date="1997" name="Nature">
        <title>The complete genome sequence of the Gram-positive bacterium Bacillus subtilis.</title>
        <authorList>
            <person name="Kunst F."/>
            <person name="Ogasawara N."/>
            <person name="Moszer I."/>
            <person name="Albertini A.M."/>
            <person name="Alloni G."/>
            <person name="Azevedo V."/>
            <person name="Bertero M.G."/>
            <person name="Bessieres P."/>
            <person name="Bolotin A."/>
            <person name="Borchert S."/>
            <person name="Borriss R."/>
            <person name="Boursier L."/>
            <person name="Brans A."/>
            <person name="Braun M."/>
            <person name="Brignell S.C."/>
            <person name="Bron S."/>
            <person name="Brouillet S."/>
            <person name="Bruschi C.V."/>
            <person name="Caldwell B."/>
            <person name="Capuano V."/>
            <person name="Carter N.M."/>
            <person name="Choi S.-K."/>
            <person name="Codani J.-J."/>
            <person name="Connerton I.F."/>
            <person name="Cummings N.J."/>
            <person name="Daniel R.A."/>
            <person name="Denizot F."/>
            <person name="Devine K.M."/>
            <person name="Duesterhoeft A."/>
            <person name="Ehrlich S.D."/>
            <person name="Emmerson P.T."/>
            <person name="Entian K.-D."/>
            <person name="Errington J."/>
            <person name="Fabret C."/>
            <person name="Ferrari E."/>
            <person name="Foulger D."/>
            <person name="Fritz C."/>
            <person name="Fujita M."/>
            <person name="Fujita Y."/>
            <person name="Fuma S."/>
            <person name="Galizzi A."/>
            <person name="Galleron N."/>
            <person name="Ghim S.-Y."/>
            <person name="Glaser P."/>
            <person name="Goffeau A."/>
            <person name="Golightly E.J."/>
            <person name="Grandi G."/>
            <person name="Guiseppi G."/>
            <person name="Guy B.J."/>
            <person name="Haga K."/>
            <person name="Haiech J."/>
            <person name="Harwood C.R."/>
            <person name="Henaut A."/>
            <person name="Hilbert H."/>
            <person name="Holsappel S."/>
            <person name="Hosono S."/>
            <person name="Hullo M.-F."/>
            <person name="Itaya M."/>
            <person name="Jones L.-M."/>
            <person name="Joris B."/>
            <person name="Karamata D."/>
            <person name="Kasahara Y."/>
            <person name="Klaerr-Blanchard M."/>
            <person name="Klein C."/>
            <person name="Kobayashi Y."/>
            <person name="Koetter P."/>
            <person name="Koningstein G."/>
            <person name="Krogh S."/>
            <person name="Kumano M."/>
            <person name="Kurita K."/>
            <person name="Lapidus A."/>
            <person name="Lardinois S."/>
            <person name="Lauber J."/>
            <person name="Lazarevic V."/>
            <person name="Lee S.-M."/>
            <person name="Levine A."/>
            <person name="Liu H."/>
            <person name="Masuda S."/>
            <person name="Mauel C."/>
            <person name="Medigue C."/>
            <person name="Medina N."/>
            <person name="Mellado R.P."/>
            <person name="Mizuno M."/>
            <person name="Moestl D."/>
            <person name="Nakai S."/>
            <person name="Noback M."/>
            <person name="Noone D."/>
            <person name="O'Reilly M."/>
            <person name="Ogawa K."/>
            <person name="Ogiwara A."/>
            <person name="Oudega B."/>
            <person name="Park S.-H."/>
            <person name="Parro V."/>
            <person name="Pohl T.M."/>
            <person name="Portetelle D."/>
            <person name="Porwollik S."/>
            <person name="Prescott A.M."/>
            <person name="Presecan E."/>
            <person name="Pujic P."/>
            <person name="Purnelle B."/>
            <person name="Rapoport G."/>
            <person name="Rey M."/>
            <person name="Reynolds S."/>
            <person name="Rieger M."/>
            <person name="Rivolta C."/>
            <person name="Rocha E."/>
            <person name="Roche B."/>
            <person name="Rose M."/>
            <person name="Sadaie Y."/>
            <person name="Sato T."/>
            <person name="Scanlan E."/>
            <person name="Schleich S."/>
            <person name="Schroeter R."/>
            <person name="Scoffone F."/>
            <person name="Sekiguchi J."/>
            <person name="Sekowska A."/>
            <person name="Seror S.J."/>
            <person name="Serror P."/>
            <person name="Shin B.-S."/>
            <person name="Soldo B."/>
            <person name="Sorokin A."/>
            <person name="Tacconi E."/>
            <person name="Takagi T."/>
            <person name="Takahashi H."/>
            <person name="Takemaru K."/>
            <person name="Takeuchi M."/>
            <person name="Tamakoshi A."/>
            <person name="Tanaka T."/>
            <person name="Terpstra P."/>
            <person name="Tognoni A."/>
            <person name="Tosato V."/>
            <person name="Uchiyama S."/>
            <person name="Vandenbol M."/>
            <person name="Vannier F."/>
            <person name="Vassarotti A."/>
            <person name="Viari A."/>
            <person name="Wambutt R."/>
            <person name="Wedler E."/>
            <person name="Wedler H."/>
            <person name="Weitzenegger T."/>
            <person name="Winters P."/>
            <person name="Wipat A."/>
            <person name="Yamamoto H."/>
            <person name="Yamane K."/>
            <person name="Yasumoto K."/>
            <person name="Yata K."/>
            <person name="Yoshida K."/>
            <person name="Yoshikawa H.-F."/>
            <person name="Zumstein E."/>
            <person name="Yoshikawa H."/>
            <person name="Danchin A."/>
        </authorList>
    </citation>
    <scope>NUCLEOTIDE SEQUENCE [LARGE SCALE GENOMIC DNA]</scope>
    <source>
        <strain>168</strain>
    </source>
</reference>
<reference key="2">
    <citation type="journal article" date="1996" name="Microbiology">
        <title>A 22 kb DNA sequence in the cspB-glpPFKD region at 75 degrees on the Bacillus subtilis chromosome.</title>
        <authorList>
            <person name="Noback M.A."/>
            <person name="Terpstra P."/>
            <person name="Holsappel S."/>
            <person name="Venema G."/>
            <person name="Bron S."/>
        </authorList>
    </citation>
    <scope>NUCLEOTIDE SEQUENCE [GENOMIC DNA] OF 449-532</scope>
    <source>
        <strain>168</strain>
    </source>
</reference>